<feature type="signal peptide" evidence="2">
    <location>
        <begin position="1"/>
        <end position="24"/>
    </location>
</feature>
<feature type="chain" id="PRO_0000356336" description="Snaclec B4">
    <location>
        <begin position="25"/>
        <end position="148"/>
    </location>
</feature>
<feature type="domain" description="C-type lectin" evidence="3">
    <location>
        <begin position="34"/>
        <end position="145"/>
    </location>
</feature>
<feature type="disulfide bond" evidence="3">
    <location>
        <begin position="27"/>
        <end position="38"/>
    </location>
</feature>
<feature type="disulfide bond" evidence="3">
    <location>
        <begin position="55"/>
        <end position="144"/>
    </location>
</feature>
<feature type="disulfide bond" description="Interchain" evidence="3">
    <location>
        <position position="100"/>
    </location>
</feature>
<feature type="disulfide bond" evidence="3">
    <location>
        <begin position="121"/>
        <end position="136"/>
    </location>
</feature>
<proteinExistence type="evidence at transcript level"/>
<accession>B4XT03</accession>
<keyword id="KW-1015">Disulfide bond</keyword>
<keyword id="KW-1199">Hemostasis impairing toxin</keyword>
<keyword id="KW-0964">Secreted</keyword>
<keyword id="KW-0732">Signal</keyword>
<keyword id="KW-0800">Toxin</keyword>
<evidence type="ECO:0000250" key="1"/>
<evidence type="ECO:0000255" key="2"/>
<evidence type="ECO:0000255" key="3">
    <source>
        <dbReference type="PROSITE-ProRule" id="PRU00040"/>
    </source>
</evidence>
<evidence type="ECO:0000305" key="4"/>
<reference key="1">
    <citation type="journal article" date="2009" name="Toxicon">
        <title>C-type lectin protein isoforms of Macrovipera lebetina: cDNA cloning and genetic diversity.</title>
        <authorList>
            <person name="Jebali J."/>
            <person name="Bazaa A."/>
            <person name="Sarray S."/>
            <person name="Benhaj K."/>
            <person name="Karboul A."/>
            <person name="El Ayeb M."/>
            <person name="Marrakchi N."/>
            <person name="Gargouri A."/>
        </authorList>
    </citation>
    <scope>NUCLEOTIDE SEQUENCE [MRNA]</scope>
</reference>
<sequence length="148" mass="16641">MGRIIFVSFGLLVVFLSLSGTGAALNCASGWSGYDQHCYKVFDKPKSWADAEKFCKKQTSGGHLVSFHSSEETDFVVKLVSQTLESQILWMGLSKVWNQCDWGWSNGAKLKYKAWAEESYCVYFSSTKKGWRSRACRLLGHFVCKSPA</sequence>
<protein>
    <recommendedName>
        <fullName>Snaclec B4</fullName>
    </recommendedName>
    <alternativeName>
        <fullName>C-type lectin B4</fullName>
    </alternativeName>
</protein>
<name>SLB4_MACLB</name>
<organism>
    <name type="scientific">Macrovipera lebetinus</name>
    <name type="common">Levantine viper</name>
    <name type="synonym">Vipera lebetina</name>
    <dbReference type="NCBI Taxonomy" id="3148341"/>
    <lineage>
        <taxon>Eukaryota</taxon>
        <taxon>Metazoa</taxon>
        <taxon>Chordata</taxon>
        <taxon>Craniata</taxon>
        <taxon>Vertebrata</taxon>
        <taxon>Euteleostomi</taxon>
        <taxon>Lepidosauria</taxon>
        <taxon>Squamata</taxon>
        <taxon>Bifurcata</taxon>
        <taxon>Unidentata</taxon>
        <taxon>Episquamata</taxon>
        <taxon>Toxicofera</taxon>
        <taxon>Serpentes</taxon>
        <taxon>Colubroidea</taxon>
        <taxon>Viperidae</taxon>
        <taxon>Viperinae</taxon>
        <taxon>Macrovipera</taxon>
    </lineage>
</organism>
<dbReference type="EMBL" id="EU085465">
    <property type="protein sequence ID" value="ABW82675.1"/>
    <property type="molecule type" value="mRNA"/>
</dbReference>
<dbReference type="SMR" id="B4XT03"/>
<dbReference type="GO" id="GO:0005576">
    <property type="term" value="C:extracellular region"/>
    <property type="evidence" value="ECO:0007669"/>
    <property type="project" value="UniProtKB-SubCell"/>
</dbReference>
<dbReference type="GO" id="GO:0090729">
    <property type="term" value="F:toxin activity"/>
    <property type="evidence" value="ECO:0007669"/>
    <property type="project" value="UniProtKB-KW"/>
</dbReference>
<dbReference type="FunFam" id="3.10.100.10:FF:000087">
    <property type="entry name" value="Snaclec rhodocetin subunit delta"/>
    <property type="match status" value="1"/>
</dbReference>
<dbReference type="Gene3D" id="3.10.100.10">
    <property type="entry name" value="Mannose-Binding Protein A, subunit A"/>
    <property type="match status" value="1"/>
</dbReference>
<dbReference type="InterPro" id="IPR001304">
    <property type="entry name" value="C-type_lectin-like"/>
</dbReference>
<dbReference type="InterPro" id="IPR016186">
    <property type="entry name" value="C-type_lectin-like/link_sf"/>
</dbReference>
<dbReference type="InterPro" id="IPR050111">
    <property type="entry name" value="C-type_lectin/snaclec_domain"/>
</dbReference>
<dbReference type="InterPro" id="IPR018378">
    <property type="entry name" value="C-type_lectin_CS"/>
</dbReference>
<dbReference type="InterPro" id="IPR016187">
    <property type="entry name" value="CTDL_fold"/>
</dbReference>
<dbReference type="PANTHER" id="PTHR22803">
    <property type="entry name" value="MANNOSE, PHOSPHOLIPASE, LECTIN RECEPTOR RELATED"/>
    <property type="match status" value="1"/>
</dbReference>
<dbReference type="Pfam" id="PF00059">
    <property type="entry name" value="Lectin_C"/>
    <property type="match status" value="1"/>
</dbReference>
<dbReference type="PRINTS" id="PR01504">
    <property type="entry name" value="PNCREATITSAP"/>
</dbReference>
<dbReference type="SMART" id="SM00034">
    <property type="entry name" value="CLECT"/>
    <property type="match status" value="1"/>
</dbReference>
<dbReference type="SUPFAM" id="SSF56436">
    <property type="entry name" value="C-type lectin-like"/>
    <property type="match status" value="1"/>
</dbReference>
<dbReference type="PROSITE" id="PS00615">
    <property type="entry name" value="C_TYPE_LECTIN_1"/>
    <property type="match status" value="1"/>
</dbReference>
<dbReference type="PROSITE" id="PS50041">
    <property type="entry name" value="C_TYPE_LECTIN_2"/>
    <property type="match status" value="1"/>
</dbReference>
<comment type="function">
    <text evidence="1">Interferes with one step of hemostasis (modulation of platelet aggregation, or coagulation cascade, for example).</text>
</comment>
<comment type="subunit">
    <text evidence="1">Heterodimer; disulfide-linked.</text>
</comment>
<comment type="subcellular location">
    <subcellularLocation>
        <location evidence="1">Secreted</location>
    </subcellularLocation>
</comment>
<comment type="tissue specificity">
    <text>Expressed by the venom gland.</text>
</comment>
<comment type="miscellaneous">
    <text>Shows greater sequence similarity to the beta than alpha subunits compared to other heterodimer snaclecs.</text>
</comment>
<comment type="similarity">
    <text evidence="4">Belongs to the snaclec family.</text>
</comment>